<evidence type="ECO:0000250" key="1">
    <source>
        <dbReference type="UniProtKB" id="Q9ES89"/>
    </source>
</evidence>
<evidence type="ECO:0000255" key="2"/>
<evidence type="ECO:0000269" key="3">
    <source>
    </source>
</evidence>
<evidence type="ECO:0000303" key="4">
    <source>
    </source>
</evidence>
<evidence type="ECO:0000303" key="5">
    <source>
    </source>
</evidence>
<evidence type="ECO:0000305" key="6"/>
<evidence type="ECO:0000312" key="7">
    <source>
        <dbReference type="Araport" id="AT5G04500"/>
    </source>
</evidence>
<evidence type="ECO:0000312" key="8">
    <source>
        <dbReference type="EMBL" id="CAB85556.1"/>
    </source>
</evidence>
<comment type="function">
    <text evidence="3">Glycosyltransferase that mediates the glycosylation of glycosylinositol phosphorylceramides (GIPCs), the major sphingolipids in the plasma membrane; acts as a HexN(Ac)-specific GIPC sugar transferase and accepts glucosamine (GlcN) and N-acetylglucosamine (GlcNAc) as the sugar unit (PubMed:29760197). Responsible for the glycosylation of a subgroup of GIPCs found in seeds and pollen that contain GlcNAc and GlcN (GlcN(Ac)) (PubMed:29760197). Maybe involved in the maintenance of cell-cell adhesion (PubMed:29760197).</text>
</comment>
<comment type="catalytic activity">
    <reaction evidence="3">
        <text>an N-(2R-hydroxy-very-long-chain fatty acyl)-(R)-4-hydroxysphingoid base + a 1,2-diacyl-sn-glycero-3-phospho-(1D-myo-inositol) = a 1D-myo-inositol-1-phospho-N-[(R)-2-hydroxy-very-long-chain fatty acyl]-(R)-4-hydroxysphingoid base + a 1,2-diacyl-sn-glycerol</text>
        <dbReference type="Rhea" id="RHEA:64536"/>
        <dbReference type="ChEBI" id="CHEBI:17815"/>
        <dbReference type="ChEBI" id="CHEBI:57880"/>
        <dbReference type="ChEBI" id="CHEBI:155886"/>
        <dbReference type="ChEBI" id="CHEBI:155926"/>
        <dbReference type="EC" id="2.7.1.227"/>
    </reaction>
    <physiologicalReaction direction="left-to-right" evidence="3">
        <dbReference type="Rhea" id="RHEA:64537"/>
    </physiologicalReaction>
</comment>
<comment type="cofactor">
    <cofactor evidence="1">
        <name>Mn(2+)</name>
        <dbReference type="ChEBI" id="CHEBI:29035"/>
    </cofactor>
</comment>
<comment type="pathway">
    <text evidence="3">Sphingolipid metabolism.</text>
</comment>
<comment type="subcellular location">
    <subcellularLocation>
        <location evidence="2">Membrane</location>
        <topology evidence="2">Multi-pass membrane protein</topology>
    </subcellularLocation>
</comment>
<comment type="tissue specificity">
    <text evidence="3">Specifically and highly expressed in developing embryos and mature seeds. Also detected at low levels in stigma and pollen.</text>
</comment>
<comment type="induction">
    <text evidence="3">Highly expressed in dry seed but drastically down-regulated after seed imbibition.</text>
</comment>
<comment type="disruption phenotype">
    <text evidence="3">Loss of the GlcN(Ac) glycosylinositol phosphorylceramides (GIPCs) leading to a reduced sensitivity to abiotic stress (e.g. abscisic acid and salt) on seed germination. Reduced HexNAc-GIPC content. Slightly larger seeds with more seed storage lipids and proteins and larger seed coat cells.</text>
</comment>
<comment type="similarity">
    <text evidence="6">Belongs to the glycosyltransferase 64 family.</text>
</comment>
<comment type="sequence caution" evidence="6">
    <conflict type="erroneous initiation">
        <sequence resource="EMBL-CDS" id="CAB85556"/>
    </conflict>
    <text>Truncated N-terminus.</text>
</comment>
<comment type="online information" name="CAZY, the Carbohydrate Active enZYmes database">
    <link uri="https://www.cazy.org/GT64_all.html"/>
</comment>
<proteinExistence type="evidence at protein level"/>
<feature type="chain" id="PRO_0000430884" description="Glucosamine inositolphosphorylceramide transferase 1">
    <location>
        <begin position="1"/>
        <end position="765"/>
    </location>
</feature>
<feature type="transmembrane region" description="Helical; Name=1" evidence="2">
    <location>
        <begin position="43"/>
        <end position="63"/>
    </location>
</feature>
<feature type="transmembrane region" description="Helical; Name=2" evidence="2">
    <location>
        <begin position="394"/>
        <end position="414"/>
    </location>
</feature>
<feature type="transmembrane region" description="Helical; Name=3" evidence="2">
    <location>
        <begin position="476"/>
        <end position="496"/>
    </location>
</feature>
<feature type="active site" evidence="1">
    <location>
        <position position="687"/>
    </location>
</feature>
<feature type="binding site" evidence="1">
    <location>
        <position position="553"/>
    </location>
    <ligand>
        <name>substrate</name>
    </ligand>
</feature>
<feature type="binding site" evidence="1">
    <location>
        <begin position="577"/>
        <end position="582"/>
    </location>
    <ligand>
        <name>substrate</name>
    </ligand>
</feature>
<feature type="binding site" evidence="1">
    <location>
        <begin position="598"/>
        <end position="600"/>
    </location>
    <ligand>
        <name>substrate</name>
    </ligand>
</feature>
<feature type="binding site" evidence="1">
    <location>
        <position position="600"/>
    </location>
    <ligand>
        <name>Mn(2+)</name>
        <dbReference type="ChEBI" id="CHEBI:29035"/>
        <note>catalytic</note>
    </ligand>
</feature>
<feature type="binding site" evidence="1">
    <location>
        <position position="628"/>
    </location>
    <ligand>
        <name>substrate</name>
    </ligand>
</feature>
<feature type="binding site" evidence="1">
    <location>
        <begin position="683"/>
        <end position="687"/>
    </location>
    <ligand>
        <name>substrate</name>
    </ligand>
</feature>
<feature type="disulfide bond" evidence="1">
    <location>
        <begin position="685"/>
        <end position="738"/>
    </location>
</feature>
<protein>
    <recommendedName>
        <fullName evidence="5">Glucosamine inositolphosphorylceramide transferase 1</fullName>
        <ecNumber evidence="3">2.7.1.227</ecNumber>
    </recommendedName>
    <alternativeName>
        <fullName evidence="4">Glycosyltransferase family protein 64 protein C5</fullName>
        <shortName evidence="4">GT64 C5</shortName>
    </alternativeName>
</protein>
<sequence length="765" mass="86431">MMEETTDNTGTISSQKNVAASGHNHHHRYKYISNYGVGRRFLFFASCFGFYAFVAATYAWFVFPPHIGRTDHVSSSSLGCREDNEGSWSIGVFYGDSPFSLKPIETRNVWRNESGAWPVTNPVITCASFTNSGLPSNFLADPFLYVQGDTLYLFFETKSPITMQGDIGAAKSIDKGATWEPLGIALDEAWHLSFPFVFNYNGEIYMMPESNEIGQLNLYRAVNFPLSWKLEKVILKKPLVDSTIVHHEGIYWLIGSDHTGFGAKKNGQLEIWYSSSPLGTWKPHKKNPIYNGKRSIGARNGGRAFLYDGSLYRVGQDCGENYGKRIRVSKIEVLSKEEYREVEVPFSLEASRKGKNSWNGVRQHHFDVKQLSSGEFIGLVDGDRVTSGDLFHRVILGYASLAAAISVVILLGFLLGVVNCIVPSTWCMNYYAGKRTDALLNLETAGLFSEKLRRIGSRLNRVPPFLRGFVKPNSSMGKFTLGVIVILGLLLTCVGVRYIYGGSGAVEPYPFKGHLSQFTLATMTYDARLWNLKMYVKRYSRCPSVKEIVVIWNKGPPPDLSELDSAVPVRIRVQKQNSLNNRFEIDPLIKTRAVLELDDDIMMPCDDIEKGFRVWREHPERLVGFYPRFVDQTMTYSAEKFARSHKGYNMILTGAAFMDVRFAFDMYQSDKAKLGRVFVDEQFNCEDILLNFLYANASGSGKAVEYVRPSLVTIDTSKFSGVAISGNTNQHYRKRSKCLRRFSDLYGSLVDRRWEFGGRKDGWDL</sequence>
<gene>
    <name evidence="5" type="primary">GINT1</name>
    <name evidence="7" type="ordered locus">At5g04500</name>
    <name evidence="8" type="ORF">T32M21.100</name>
</gene>
<dbReference type="EC" id="2.7.1.227" evidence="3"/>
<dbReference type="EMBL" id="KJ138705">
    <property type="protein sequence ID" value="AHL38645.1"/>
    <property type="molecule type" value="mRNA"/>
</dbReference>
<dbReference type="EMBL" id="AL162875">
    <property type="protein sequence ID" value="CAB85556.1"/>
    <property type="status" value="ALT_INIT"/>
    <property type="molecule type" value="Genomic_DNA"/>
</dbReference>
<dbReference type="EMBL" id="CP002688">
    <property type="protein sequence ID" value="AED90753.1"/>
    <property type="molecule type" value="Genomic_DNA"/>
</dbReference>
<dbReference type="EMBL" id="BT004019">
    <property type="protein sequence ID" value="AAO42055.1"/>
    <property type="molecule type" value="mRNA"/>
</dbReference>
<dbReference type="PIR" id="T48446">
    <property type="entry name" value="T48446"/>
</dbReference>
<dbReference type="RefSeq" id="NP_196070.2">
    <property type="nucleotide sequence ID" value="NM_120532.3"/>
</dbReference>
<dbReference type="SMR" id="Q84WB7"/>
<dbReference type="STRING" id="3702.Q84WB7"/>
<dbReference type="CAZy" id="GT64">
    <property type="family name" value="Glycosyltransferase Family 64"/>
</dbReference>
<dbReference type="PaxDb" id="3702-AT5G04500.1"/>
<dbReference type="ProteomicsDB" id="220764"/>
<dbReference type="EnsemblPlants" id="AT5G04500.1">
    <property type="protein sequence ID" value="AT5G04500.1"/>
    <property type="gene ID" value="AT5G04500"/>
</dbReference>
<dbReference type="GeneID" id="830329"/>
<dbReference type="Gramene" id="AT5G04500.1">
    <property type="protein sequence ID" value="AT5G04500.1"/>
    <property type="gene ID" value="AT5G04500"/>
</dbReference>
<dbReference type="KEGG" id="ath:AT5G04500"/>
<dbReference type="Araport" id="AT5G04500"/>
<dbReference type="TAIR" id="AT5G04500">
    <property type="gene designation" value="GINT1"/>
</dbReference>
<dbReference type="eggNOG" id="KOG1022">
    <property type="taxonomic scope" value="Eukaryota"/>
</dbReference>
<dbReference type="HOGENOM" id="CLU_010984_0_0_1"/>
<dbReference type="InParanoid" id="Q84WB7"/>
<dbReference type="OMA" id="NHAREHN"/>
<dbReference type="PhylomeDB" id="Q84WB7"/>
<dbReference type="BioCyc" id="ARA:AT5G04500-MONOMER"/>
<dbReference type="PRO" id="PR:Q84WB7"/>
<dbReference type="Proteomes" id="UP000006548">
    <property type="component" value="Chromosome 5"/>
</dbReference>
<dbReference type="ExpressionAtlas" id="Q84WB7">
    <property type="expression patterns" value="baseline and differential"/>
</dbReference>
<dbReference type="GO" id="GO:0016020">
    <property type="term" value="C:membrane"/>
    <property type="evidence" value="ECO:0007669"/>
    <property type="project" value="UniProtKB-SubCell"/>
</dbReference>
<dbReference type="GO" id="GO:0016757">
    <property type="term" value="F:glycosyltransferase activity"/>
    <property type="evidence" value="ECO:0000315"/>
    <property type="project" value="TAIR"/>
</dbReference>
<dbReference type="GO" id="GO:0045140">
    <property type="term" value="F:inositol phosphoceramide synthase activity"/>
    <property type="evidence" value="ECO:0007669"/>
    <property type="project" value="UniProtKB-EC"/>
</dbReference>
<dbReference type="GO" id="GO:0046872">
    <property type="term" value="F:metal ion binding"/>
    <property type="evidence" value="ECO:0007669"/>
    <property type="project" value="UniProtKB-KW"/>
</dbReference>
<dbReference type="GO" id="GO:0030259">
    <property type="term" value="P:lipid glycosylation"/>
    <property type="evidence" value="ECO:0000315"/>
    <property type="project" value="TAIR"/>
</dbReference>
<dbReference type="GO" id="GO:0006486">
    <property type="term" value="P:protein glycosylation"/>
    <property type="evidence" value="ECO:0007669"/>
    <property type="project" value="InterPro"/>
</dbReference>
<dbReference type="GO" id="GO:0009737">
    <property type="term" value="P:response to abscisic acid"/>
    <property type="evidence" value="ECO:0000315"/>
    <property type="project" value="UniProtKB"/>
</dbReference>
<dbReference type="GO" id="GO:0009651">
    <property type="term" value="P:response to salt stress"/>
    <property type="evidence" value="ECO:0000315"/>
    <property type="project" value="TAIR"/>
</dbReference>
<dbReference type="GO" id="GO:0009845">
    <property type="term" value="P:seed germination"/>
    <property type="evidence" value="ECO:0000315"/>
    <property type="project" value="TAIR"/>
</dbReference>
<dbReference type="FunFam" id="2.115.10.20:FF:000004">
    <property type="entry name" value="Glucosamine inositolphosphorylceramide transferase 1"/>
    <property type="match status" value="1"/>
</dbReference>
<dbReference type="FunFam" id="3.90.550.10:FF:000095">
    <property type="entry name" value="Glycosyltransferase family protein 64 protein C5"/>
    <property type="match status" value="1"/>
</dbReference>
<dbReference type="Gene3D" id="2.115.10.20">
    <property type="entry name" value="Glycosyl hydrolase domain, family 43"/>
    <property type="match status" value="1"/>
</dbReference>
<dbReference type="Gene3D" id="3.90.550.10">
    <property type="entry name" value="Spore Coat Polysaccharide Biosynthesis Protein SpsA, Chain A"/>
    <property type="match status" value="1"/>
</dbReference>
<dbReference type="InterPro" id="IPR004263">
    <property type="entry name" value="Exostosin"/>
</dbReference>
<dbReference type="InterPro" id="IPR056442">
    <property type="entry name" value="GINT1_N"/>
</dbReference>
<dbReference type="InterPro" id="IPR023296">
    <property type="entry name" value="Glyco_hydro_beta-prop_sf"/>
</dbReference>
<dbReference type="InterPro" id="IPR015338">
    <property type="entry name" value="GT64_dom"/>
</dbReference>
<dbReference type="InterPro" id="IPR029044">
    <property type="entry name" value="Nucleotide-diphossugar_trans"/>
</dbReference>
<dbReference type="PANTHER" id="PTHR48261">
    <property type="entry name" value="ACETYLGLUCOSAMINYLTRANSFERASE"/>
    <property type="match status" value="1"/>
</dbReference>
<dbReference type="PANTHER" id="PTHR48261:SF6">
    <property type="entry name" value="GLYCOSYLTRANSFERASE FAMILY PROTEIN"/>
    <property type="match status" value="1"/>
</dbReference>
<dbReference type="Pfam" id="PF24793">
    <property type="entry name" value="GINT1_N"/>
    <property type="match status" value="1"/>
</dbReference>
<dbReference type="Pfam" id="PF09258">
    <property type="entry name" value="Glyco_transf_64"/>
    <property type="match status" value="1"/>
</dbReference>
<dbReference type="SUPFAM" id="SSF75005">
    <property type="entry name" value="Arabinanase/levansucrase/invertase"/>
    <property type="match status" value="1"/>
</dbReference>
<dbReference type="SUPFAM" id="SSF53448">
    <property type="entry name" value="Nucleotide-diphospho-sugar transferases"/>
    <property type="match status" value="1"/>
</dbReference>
<keyword id="KW-1015">Disulfide bond</keyword>
<keyword id="KW-0464">Manganese</keyword>
<keyword id="KW-0472">Membrane</keyword>
<keyword id="KW-0479">Metal-binding</keyword>
<keyword id="KW-1185">Reference proteome</keyword>
<keyword id="KW-0808">Transferase</keyword>
<keyword id="KW-0812">Transmembrane</keyword>
<keyword id="KW-1133">Transmembrane helix</keyword>
<name>GINT1_ARATH</name>
<organism>
    <name type="scientific">Arabidopsis thaliana</name>
    <name type="common">Mouse-ear cress</name>
    <dbReference type="NCBI Taxonomy" id="3702"/>
    <lineage>
        <taxon>Eukaryota</taxon>
        <taxon>Viridiplantae</taxon>
        <taxon>Streptophyta</taxon>
        <taxon>Embryophyta</taxon>
        <taxon>Tracheophyta</taxon>
        <taxon>Spermatophyta</taxon>
        <taxon>Magnoliopsida</taxon>
        <taxon>eudicotyledons</taxon>
        <taxon>Gunneridae</taxon>
        <taxon>Pentapetalae</taxon>
        <taxon>rosids</taxon>
        <taxon>malvids</taxon>
        <taxon>Brassicales</taxon>
        <taxon>Brassicaceae</taxon>
        <taxon>Camelineae</taxon>
        <taxon>Arabidopsis</taxon>
    </lineage>
</organism>
<accession>Q84WB7</accession>
<accession>Q9LZ75</accession>
<reference key="1">
    <citation type="journal article" date="2014" name="Plant J.">
        <title>The plant glycosyltransferase clone collection for functional genomics.</title>
        <authorList>
            <person name="Lao J."/>
            <person name="Oikawa A."/>
            <person name="Bromley J.R."/>
            <person name="McInerney P."/>
            <person name="Suttangkakul A."/>
            <person name="Smith-Moritz A.M."/>
            <person name="Plahar H."/>
            <person name="Chiu T.-Y."/>
            <person name="Gonzalez Fernandez-Nino S.M.G."/>
            <person name="Ebert B."/>
            <person name="Yang F."/>
            <person name="Christiansen K.M."/>
            <person name="Hansen S.F."/>
            <person name="Stonebloom S."/>
            <person name="Adams P.D."/>
            <person name="Ronald P.C."/>
            <person name="Hillson N.J."/>
            <person name="Hadi M.Z."/>
            <person name="Vega-Sanchez M.E."/>
            <person name="Loque D."/>
            <person name="Scheller H.V."/>
            <person name="Heazlewood J.L."/>
        </authorList>
    </citation>
    <scope>NUCLEOTIDE SEQUENCE [MRNA]</scope>
    <scope>WEB RESOURCE</scope>
    <scope>GENE FAMILY</scope>
    <source>
        <strain>cv. Columbia</strain>
    </source>
</reference>
<reference key="2">
    <citation type="journal article" date="2000" name="Nature">
        <title>Sequence and analysis of chromosome 5 of the plant Arabidopsis thaliana.</title>
        <authorList>
            <person name="Tabata S."/>
            <person name="Kaneko T."/>
            <person name="Nakamura Y."/>
            <person name="Kotani H."/>
            <person name="Kato T."/>
            <person name="Asamizu E."/>
            <person name="Miyajima N."/>
            <person name="Sasamoto S."/>
            <person name="Kimura T."/>
            <person name="Hosouchi T."/>
            <person name="Kawashima K."/>
            <person name="Kohara M."/>
            <person name="Matsumoto M."/>
            <person name="Matsuno A."/>
            <person name="Muraki A."/>
            <person name="Nakayama S."/>
            <person name="Nakazaki N."/>
            <person name="Naruo K."/>
            <person name="Okumura S."/>
            <person name="Shinpo S."/>
            <person name="Takeuchi C."/>
            <person name="Wada T."/>
            <person name="Watanabe A."/>
            <person name="Yamada M."/>
            <person name="Yasuda M."/>
            <person name="Sato S."/>
            <person name="de la Bastide M."/>
            <person name="Huang E."/>
            <person name="Spiegel L."/>
            <person name="Gnoj L."/>
            <person name="O'Shaughnessy A."/>
            <person name="Preston R."/>
            <person name="Habermann K."/>
            <person name="Murray J."/>
            <person name="Johnson D."/>
            <person name="Rohlfing T."/>
            <person name="Nelson J."/>
            <person name="Stoneking T."/>
            <person name="Pepin K."/>
            <person name="Spieth J."/>
            <person name="Sekhon M."/>
            <person name="Armstrong J."/>
            <person name="Becker M."/>
            <person name="Belter E."/>
            <person name="Cordum H."/>
            <person name="Cordes M."/>
            <person name="Courtney L."/>
            <person name="Courtney W."/>
            <person name="Dante M."/>
            <person name="Du H."/>
            <person name="Edwards J."/>
            <person name="Fryman J."/>
            <person name="Haakensen B."/>
            <person name="Lamar E."/>
            <person name="Latreille P."/>
            <person name="Leonard S."/>
            <person name="Meyer R."/>
            <person name="Mulvaney E."/>
            <person name="Ozersky P."/>
            <person name="Riley A."/>
            <person name="Strowmatt C."/>
            <person name="Wagner-McPherson C."/>
            <person name="Wollam A."/>
            <person name="Yoakum M."/>
            <person name="Bell M."/>
            <person name="Dedhia N."/>
            <person name="Parnell L."/>
            <person name="Shah R."/>
            <person name="Rodriguez M."/>
            <person name="Hoon See L."/>
            <person name="Vil D."/>
            <person name="Baker J."/>
            <person name="Kirchoff K."/>
            <person name="Toth K."/>
            <person name="King L."/>
            <person name="Bahret A."/>
            <person name="Miller B."/>
            <person name="Marra M.A."/>
            <person name="Martienssen R."/>
            <person name="McCombie W.R."/>
            <person name="Wilson R.K."/>
            <person name="Murphy G."/>
            <person name="Bancroft I."/>
            <person name="Volckaert G."/>
            <person name="Wambutt R."/>
            <person name="Duesterhoeft A."/>
            <person name="Stiekema W."/>
            <person name="Pohl T."/>
            <person name="Entian K.-D."/>
            <person name="Terryn N."/>
            <person name="Hartley N."/>
            <person name="Bent E."/>
            <person name="Johnson S."/>
            <person name="Langham S.-A."/>
            <person name="McCullagh B."/>
            <person name="Robben J."/>
            <person name="Grymonprez B."/>
            <person name="Zimmermann W."/>
            <person name="Ramsperger U."/>
            <person name="Wedler H."/>
            <person name="Balke K."/>
            <person name="Wedler E."/>
            <person name="Peters S."/>
            <person name="van Staveren M."/>
            <person name="Dirkse W."/>
            <person name="Mooijman P."/>
            <person name="Klein Lankhorst R."/>
            <person name="Weitzenegger T."/>
            <person name="Bothe G."/>
            <person name="Rose M."/>
            <person name="Hauf J."/>
            <person name="Berneiser S."/>
            <person name="Hempel S."/>
            <person name="Feldpausch M."/>
            <person name="Lamberth S."/>
            <person name="Villarroel R."/>
            <person name="Gielen J."/>
            <person name="Ardiles W."/>
            <person name="Bents O."/>
            <person name="Lemcke K."/>
            <person name="Kolesov G."/>
            <person name="Mayer K.F.X."/>
            <person name="Rudd S."/>
            <person name="Schoof H."/>
            <person name="Schueller C."/>
            <person name="Zaccaria P."/>
            <person name="Mewes H.-W."/>
            <person name="Bevan M."/>
            <person name="Fransz P.F."/>
        </authorList>
    </citation>
    <scope>NUCLEOTIDE SEQUENCE [LARGE SCALE GENOMIC DNA]</scope>
    <source>
        <strain>cv. Columbia</strain>
    </source>
</reference>
<reference key="3">
    <citation type="journal article" date="2017" name="Plant J.">
        <title>Araport11: a complete reannotation of the Arabidopsis thaliana reference genome.</title>
        <authorList>
            <person name="Cheng C.Y."/>
            <person name="Krishnakumar V."/>
            <person name="Chan A.P."/>
            <person name="Thibaud-Nissen F."/>
            <person name="Schobel S."/>
            <person name="Town C.D."/>
        </authorList>
    </citation>
    <scope>GENOME REANNOTATION</scope>
    <source>
        <strain>cv. Columbia</strain>
    </source>
</reference>
<reference key="4">
    <citation type="journal article" date="2003" name="Science">
        <title>Empirical analysis of transcriptional activity in the Arabidopsis genome.</title>
        <authorList>
            <person name="Yamada K."/>
            <person name="Lim J."/>
            <person name="Dale J.M."/>
            <person name="Chen H."/>
            <person name="Shinn P."/>
            <person name="Palm C.J."/>
            <person name="Southwick A.M."/>
            <person name="Wu H.C."/>
            <person name="Kim C.J."/>
            <person name="Nguyen M."/>
            <person name="Pham P.K."/>
            <person name="Cheuk R.F."/>
            <person name="Karlin-Newmann G."/>
            <person name="Liu S.X."/>
            <person name="Lam B."/>
            <person name="Sakano H."/>
            <person name="Wu T."/>
            <person name="Yu G."/>
            <person name="Miranda M."/>
            <person name="Quach H.L."/>
            <person name="Tripp M."/>
            <person name="Chang C.H."/>
            <person name="Lee J.M."/>
            <person name="Toriumi M.J."/>
            <person name="Chan M.M."/>
            <person name="Tang C.C."/>
            <person name="Onodera C.S."/>
            <person name="Deng J.M."/>
            <person name="Akiyama K."/>
            <person name="Ansari Y."/>
            <person name="Arakawa T."/>
            <person name="Banh J."/>
            <person name="Banno F."/>
            <person name="Bowser L."/>
            <person name="Brooks S.Y."/>
            <person name="Carninci P."/>
            <person name="Chao Q."/>
            <person name="Choy N."/>
            <person name="Enju A."/>
            <person name="Goldsmith A.D."/>
            <person name="Gurjal M."/>
            <person name="Hansen N.F."/>
            <person name="Hayashizaki Y."/>
            <person name="Johnson-Hopson C."/>
            <person name="Hsuan V.W."/>
            <person name="Iida K."/>
            <person name="Karnes M."/>
            <person name="Khan S."/>
            <person name="Koesema E."/>
            <person name="Ishida J."/>
            <person name="Jiang P.X."/>
            <person name="Jones T."/>
            <person name="Kawai J."/>
            <person name="Kamiya A."/>
            <person name="Meyers C."/>
            <person name="Nakajima M."/>
            <person name="Narusaka M."/>
            <person name="Seki M."/>
            <person name="Sakurai T."/>
            <person name="Satou M."/>
            <person name="Tamse R."/>
            <person name="Vaysberg M."/>
            <person name="Wallender E.K."/>
            <person name="Wong C."/>
            <person name="Yamamura Y."/>
            <person name="Yuan S."/>
            <person name="Shinozaki K."/>
            <person name="Davis R.W."/>
            <person name="Theologis A."/>
            <person name="Ecker J.R."/>
        </authorList>
    </citation>
    <scope>NUCLEOTIDE SEQUENCE [LARGE SCALE MRNA]</scope>
    <source>
        <strain>cv. Columbia</strain>
    </source>
</reference>
<reference key="5">
    <citation type="journal article" date="2005" name="Plant J.">
        <title>Cell adhesion in Arabidopsis thaliana is mediated by ECTOPICALLY PARTING CELLS 1--a glycosyltransferase (GT64) related to the animal exostosins.</title>
        <authorList>
            <person name="Singh S.K."/>
            <person name="Eland C."/>
            <person name="Harholt J."/>
            <person name="Scheller H.V."/>
            <person name="Marchant A."/>
        </authorList>
    </citation>
    <scope>GENE FAMILY</scope>
</reference>
<reference key="6">
    <citation type="journal article" date="2018" name="Plant Physiol.">
        <title>GLUCOSAMINE INOSITOLPHOSPHORYLCERAMIDE TRANSFERASE1 (GINT1) is a GlcNAc-containing glycosylinositol phosphorylceramide glycosyltransferase.</title>
        <authorList>
            <person name="Ishikawa T."/>
            <person name="Fang L."/>
            <person name="Rennie E.A."/>
            <person name="Sechet J."/>
            <person name="Yan J."/>
            <person name="Jing B."/>
            <person name="Moore W."/>
            <person name="Cahoon E.B."/>
            <person name="Scheller H.V."/>
            <person name="Kawai-Yamada M."/>
            <person name="Mortimer J.C."/>
        </authorList>
    </citation>
    <scope>FUNCTION</scope>
    <scope>DISRUPTION PHENOTYPE</scope>
    <scope>CATALYTIC ACTIVITY</scope>
    <scope>PATHWAY</scope>
    <scope>TISSUE SPECIFICITY</scope>
    <scope>REPRESSION BY IMBIBITION</scope>
    <source>
        <strain>cv. Columbia</strain>
    </source>
</reference>
<reference key="7">
    <citation type="journal article" date="2013" name="Curr. Opin. Plant Biol.">
        <title>Plant sphingolipids: function follows form.</title>
        <authorList>
            <person name="Markham J.E."/>
            <person name="Lynch D.V."/>
            <person name="Napier J.A."/>
            <person name="Dunn T.M."/>
            <person name="Cahoon E.B."/>
        </authorList>
    </citation>
    <scope>REVIEW ON SPHINGOLIPIDS</scope>
</reference>
<reference key="8">
    <citation type="journal article" date="2020" name="Trends Plant Sci.">
        <title>Synthesis and function of complex sphingolipid glycosylation.</title>
        <authorList>
            <person name="Mortimer J.C."/>
            <person name="Scheller H.V."/>
        </authorList>
    </citation>
    <scope>REVIEW</scope>
</reference>